<accession>B2TW72</accession>
<organism>
    <name type="scientific">Shigella boydii serotype 18 (strain CDC 3083-94 / BS512)</name>
    <dbReference type="NCBI Taxonomy" id="344609"/>
    <lineage>
        <taxon>Bacteria</taxon>
        <taxon>Pseudomonadati</taxon>
        <taxon>Pseudomonadota</taxon>
        <taxon>Gammaproteobacteria</taxon>
        <taxon>Enterobacterales</taxon>
        <taxon>Enterobacteriaceae</taxon>
        <taxon>Shigella</taxon>
    </lineage>
</organism>
<gene>
    <name evidence="1" type="primary">yfbR</name>
    <name type="ordered locus">SbBS512_E2667</name>
</gene>
<protein>
    <recommendedName>
        <fullName evidence="1">5'-deoxynucleotidase YfbR</fullName>
        <ecNumber evidence="1">3.1.3.89</ecNumber>
    </recommendedName>
    <alternativeName>
        <fullName evidence="1">5'-deoxyribonucleotidase</fullName>
    </alternativeName>
    <alternativeName>
        <fullName evidence="1">Nucleoside 5'-monophosphate phosphohydrolase</fullName>
    </alternativeName>
</protein>
<reference key="1">
    <citation type="submission" date="2008-05" db="EMBL/GenBank/DDBJ databases">
        <title>Complete sequence of Shigella boydii serotype 18 strain BS512.</title>
        <authorList>
            <person name="Rasko D.A."/>
            <person name="Rosovitz M."/>
            <person name="Maurelli A.T."/>
            <person name="Myers G."/>
            <person name="Seshadri R."/>
            <person name="Cer R."/>
            <person name="Jiang L."/>
            <person name="Ravel J."/>
            <person name="Sebastian Y."/>
        </authorList>
    </citation>
    <scope>NUCLEOTIDE SEQUENCE [LARGE SCALE GENOMIC DNA]</scope>
    <source>
        <strain>CDC 3083-94 / BS512</strain>
    </source>
</reference>
<comment type="function">
    <text evidence="1">Catalyzes the strictly specific dephosphorylation of 2'-deoxyribonucleoside 5'-monophosphates.</text>
</comment>
<comment type="catalytic activity">
    <reaction evidence="1">
        <text>a 2'-deoxyribonucleoside 5'-phosphate + H2O = a 2'-deoxyribonucleoside + phosphate</text>
        <dbReference type="Rhea" id="RHEA:36167"/>
        <dbReference type="ChEBI" id="CHEBI:15377"/>
        <dbReference type="ChEBI" id="CHEBI:18274"/>
        <dbReference type="ChEBI" id="CHEBI:43474"/>
        <dbReference type="ChEBI" id="CHEBI:65317"/>
        <dbReference type="EC" id="3.1.3.89"/>
    </reaction>
</comment>
<comment type="cofactor">
    <cofactor evidence="1">
        <name>a divalent metal cation</name>
        <dbReference type="ChEBI" id="CHEBI:60240"/>
    </cofactor>
</comment>
<comment type="subunit">
    <text evidence="1">Homodimer.</text>
</comment>
<comment type="subcellular location">
    <subcellularLocation>
        <location evidence="1">Cytoplasm</location>
    </subcellularLocation>
</comment>
<comment type="similarity">
    <text evidence="1">Belongs to the 5DNU family.</text>
</comment>
<sequence length="199" mass="22651">MKQSHFFAHLSRLKLINRWPLMRNVLTENVSEHSLQVAMVAHALAAIKNRKFGGNVNAERIALLAMYHDASEVLTGDLPTPVKYFNSQIAQEYKAIEKIAQQKLVDMVPEELRDIFAPLIDEHAYSDEEKSLVKQADALCAYLKCLEELAAGNNEFLLAKTRLEATLEARRSQEMDYFMEVFVPSFHLSLDEISQDSPL</sequence>
<feature type="chain" id="PRO_1000136979" description="5'-deoxynucleotidase YfbR">
    <location>
        <begin position="1"/>
        <end position="199"/>
    </location>
</feature>
<feature type="domain" description="HD" evidence="2">
    <location>
        <begin position="30"/>
        <end position="142"/>
    </location>
</feature>
<feature type="binding site" evidence="1">
    <location>
        <begin position="18"/>
        <end position="19"/>
    </location>
    <ligand>
        <name>substrate</name>
    </ligand>
</feature>
<feature type="binding site" evidence="1">
    <location>
        <position position="33"/>
    </location>
    <ligand>
        <name>a divalent metal cation</name>
        <dbReference type="ChEBI" id="CHEBI:60240"/>
    </ligand>
</feature>
<feature type="binding site" evidence="1">
    <location>
        <position position="33"/>
    </location>
    <ligand>
        <name>substrate</name>
    </ligand>
</feature>
<feature type="binding site" evidence="1">
    <location>
        <position position="68"/>
    </location>
    <ligand>
        <name>a divalent metal cation</name>
        <dbReference type="ChEBI" id="CHEBI:60240"/>
    </ligand>
</feature>
<feature type="binding site" evidence="1">
    <location>
        <position position="69"/>
    </location>
    <ligand>
        <name>a divalent metal cation</name>
        <dbReference type="ChEBI" id="CHEBI:60240"/>
    </ligand>
</feature>
<feature type="binding site" evidence="1">
    <location>
        <position position="69"/>
    </location>
    <ligand>
        <name>substrate</name>
    </ligand>
</feature>
<feature type="binding site" evidence="1">
    <location>
        <begin position="77"/>
        <end position="80"/>
    </location>
    <ligand>
        <name>substrate</name>
    </ligand>
</feature>
<feature type="binding site" evidence="1">
    <location>
        <position position="137"/>
    </location>
    <ligand>
        <name>a divalent metal cation</name>
        <dbReference type="ChEBI" id="CHEBI:60240"/>
    </ligand>
</feature>
<feature type="binding site" evidence="1">
    <location>
        <position position="137"/>
    </location>
    <ligand>
        <name>substrate</name>
    </ligand>
</feature>
<feature type="site" description="Appears to be important in orienting the phosphate for catalysis" evidence="1">
    <location>
        <position position="18"/>
    </location>
</feature>
<keyword id="KW-0963">Cytoplasm</keyword>
<keyword id="KW-0378">Hydrolase</keyword>
<keyword id="KW-0479">Metal-binding</keyword>
<keyword id="KW-0547">Nucleotide-binding</keyword>
<keyword id="KW-1185">Reference proteome</keyword>
<name>5DNU_SHIB3</name>
<evidence type="ECO:0000255" key="1">
    <source>
        <dbReference type="HAMAP-Rule" id="MF_01100"/>
    </source>
</evidence>
<evidence type="ECO:0000255" key="2">
    <source>
        <dbReference type="PROSITE-ProRule" id="PRU01175"/>
    </source>
</evidence>
<dbReference type="EC" id="3.1.3.89" evidence="1"/>
<dbReference type="EMBL" id="CP001063">
    <property type="protein sequence ID" value="ACD09242.1"/>
    <property type="molecule type" value="Genomic_DNA"/>
</dbReference>
<dbReference type="RefSeq" id="WP_000813847.1">
    <property type="nucleotide sequence ID" value="NC_010658.1"/>
</dbReference>
<dbReference type="SMR" id="B2TW72"/>
<dbReference type="STRING" id="344609.SbBS512_E2667"/>
<dbReference type="KEGG" id="sbc:SbBS512_E2667"/>
<dbReference type="HOGENOM" id="CLU_084784_0_0_6"/>
<dbReference type="Proteomes" id="UP000001030">
    <property type="component" value="Chromosome"/>
</dbReference>
<dbReference type="GO" id="GO:0005737">
    <property type="term" value="C:cytoplasm"/>
    <property type="evidence" value="ECO:0007669"/>
    <property type="project" value="UniProtKB-SubCell"/>
</dbReference>
<dbReference type="GO" id="GO:0002953">
    <property type="term" value="F:5'-deoxynucleotidase activity"/>
    <property type="evidence" value="ECO:0007669"/>
    <property type="project" value="UniProtKB-EC"/>
</dbReference>
<dbReference type="GO" id="GO:0046872">
    <property type="term" value="F:metal ion binding"/>
    <property type="evidence" value="ECO:0007669"/>
    <property type="project" value="UniProtKB-KW"/>
</dbReference>
<dbReference type="GO" id="GO:0000166">
    <property type="term" value="F:nucleotide binding"/>
    <property type="evidence" value="ECO:0007669"/>
    <property type="project" value="UniProtKB-KW"/>
</dbReference>
<dbReference type="CDD" id="cd00077">
    <property type="entry name" value="HDc"/>
    <property type="match status" value="1"/>
</dbReference>
<dbReference type="FunFam" id="1.10.3210.10:FF:000002">
    <property type="entry name" value="Nucleotidase YfbR"/>
    <property type="match status" value="1"/>
</dbReference>
<dbReference type="Gene3D" id="1.10.3210.10">
    <property type="entry name" value="Hypothetical protein af1432"/>
    <property type="match status" value="1"/>
</dbReference>
<dbReference type="HAMAP" id="MF_01100">
    <property type="entry name" value="5DNU"/>
    <property type="match status" value="1"/>
</dbReference>
<dbReference type="InterPro" id="IPR003607">
    <property type="entry name" value="HD/PDEase_dom"/>
</dbReference>
<dbReference type="InterPro" id="IPR006674">
    <property type="entry name" value="HD_domain"/>
</dbReference>
<dbReference type="InterPro" id="IPR022971">
    <property type="entry name" value="YfbR"/>
</dbReference>
<dbReference type="InterPro" id="IPR039356">
    <property type="entry name" value="YfbR/HDDC2"/>
</dbReference>
<dbReference type="NCBIfam" id="NF003009">
    <property type="entry name" value="PRK03826.1"/>
    <property type="match status" value="1"/>
</dbReference>
<dbReference type="PANTHER" id="PTHR11845">
    <property type="entry name" value="5'-DEOXYNUCLEOTIDASE HDDC2"/>
    <property type="match status" value="1"/>
</dbReference>
<dbReference type="PANTHER" id="PTHR11845:SF13">
    <property type="entry name" value="5'-DEOXYNUCLEOTIDASE HDDC2"/>
    <property type="match status" value="1"/>
</dbReference>
<dbReference type="Pfam" id="PF12917">
    <property type="entry name" value="YfbR-like"/>
    <property type="match status" value="1"/>
</dbReference>
<dbReference type="SMART" id="SM00471">
    <property type="entry name" value="HDc"/>
    <property type="match status" value="1"/>
</dbReference>
<dbReference type="SUPFAM" id="SSF109604">
    <property type="entry name" value="HD-domain/PDEase-like"/>
    <property type="match status" value="1"/>
</dbReference>
<dbReference type="PROSITE" id="PS51831">
    <property type="entry name" value="HD"/>
    <property type="match status" value="1"/>
</dbReference>
<proteinExistence type="inferred from homology"/>